<protein>
    <recommendedName>
        <fullName evidence="3">Caerulein</fullName>
    </recommendedName>
</protein>
<comment type="function">
    <text evidence="1">Induces contraction of intestinal smooth muscle in isolated guinea pig ileum.</text>
</comment>
<comment type="subcellular location">
    <subcellularLocation>
        <location evidence="2">Secreted</location>
    </subcellularLocation>
</comment>
<comment type="tissue specificity">
    <text evidence="5">Expressed by the skin glands.</text>
</comment>
<comment type="mass spectrometry" mass="1272.5" method="MALDI" evidence="2"/>
<comment type="similarity">
    <text evidence="4">Belongs to the gastrin/cholecystokinin family.</text>
</comment>
<feature type="peptide" id="PRO_0000440919" description="Caerulein" evidence="2">
    <location>
        <begin position="1"/>
        <end position="10"/>
    </location>
</feature>
<feature type="modified residue" description="Pyrrolidone carboxylic acid" evidence="2">
    <location>
        <position position="1"/>
    </location>
</feature>
<feature type="modified residue" description="Sulfotyrosine; partial" evidence="2">
    <location>
        <position position="4"/>
    </location>
</feature>
<feature type="modified residue" description="Phenylalanine amide" evidence="2">
    <location>
        <position position="10"/>
    </location>
</feature>
<keyword id="KW-0027">Amidation</keyword>
<keyword id="KW-0878">Amphibian defense peptide</keyword>
<keyword id="KW-0903">Direct protein sequencing</keyword>
<keyword id="KW-0873">Pyrrolidone carboxylic acid</keyword>
<keyword id="KW-0964">Secreted</keyword>
<keyword id="KW-0765">Sulfation</keyword>
<accession>C0HKM4</accession>
<organism evidence="3">
    <name type="scientific">Xenopus ruwenzoriensis</name>
    <name type="common">Uganda clawed frog</name>
    <dbReference type="NCBI Taxonomy" id="105430"/>
    <lineage>
        <taxon>Eukaryota</taxon>
        <taxon>Metazoa</taxon>
        <taxon>Chordata</taxon>
        <taxon>Craniata</taxon>
        <taxon>Vertebrata</taxon>
        <taxon>Euteleostomi</taxon>
        <taxon>Amphibia</taxon>
        <taxon>Batrachia</taxon>
        <taxon>Anura</taxon>
        <taxon>Pipoidea</taxon>
        <taxon>Pipidae</taxon>
        <taxon>Xenopodinae</taxon>
        <taxon>Xenopus</taxon>
        <taxon>Xenopus</taxon>
    </lineage>
</organism>
<sequence length="10" mass="1290">QQDYTGWMDF</sequence>
<reference evidence="4" key="1">
    <citation type="journal article" date="2016" name="Comp. Biochem. Physiol.">
        <title>Peptidomic analysis of the extensive array of host-defense peptides in skin secretions of the dodecaploid frog Xenopus ruwenzoriensis (Pipidae).</title>
        <authorList>
            <person name="Coquet L."/>
            <person name="Kolodziejek J."/>
            <person name="Jouenne T."/>
            <person name="Nowotny N."/>
            <person name="King J.D."/>
            <person name="Conlon J.M."/>
        </authorList>
    </citation>
    <scope>PROTEIN SEQUENCE</scope>
    <scope>SUBCELLULAR LOCATION</scope>
    <scope>MASS SPECTROMETRY</scope>
    <scope>PYROGLUTAMATE FORMATION AT GLN-1</scope>
    <scope>SULFATION AT TYR-4</scope>
    <scope>AMIDATION AT PHE-10</scope>
    <source>
        <tissue evidence="3">Skin secretion</tissue>
    </source>
</reference>
<proteinExistence type="evidence at protein level"/>
<dbReference type="GO" id="GO:0005576">
    <property type="term" value="C:extracellular region"/>
    <property type="evidence" value="ECO:0007669"/>
    <property type="project" value="UniProtKB-SubCell"/>
</dbReference>
<dbReference type="GO" id="GO:0006952">
    <property type="term" value="P:defense response"/>
    <property type="evidence" value="ECO:0007669"/>
    <property type="project" value="UniProtKB-KW"/>
</dbReference>
<dbReference type="InterPro" id="IPR013152">
    <property type="entry name" value="Gastrin/cholecystokinin_CS"/>
</dbReference>
<dbReference type="PROSITE" id="PS00259">
    <property type="entry name" value="GASTRIN"/>
    <property type="match status" value="1"/>
</dbReference>
<evidence type="ECO:0000250" key="1">
    <source>
        <dbReference type="UniProtKB" id="P86486"/>
    </source>
</evidence>
<evidence type="ECO:0000269" key="2">
    <source>
    </source>
</evidence>
<evidence type="ECO:0000303" key="3">
    <source>
    </source>
</evidence>
<evidence type="ECO:0000305" key="4"/>
<evidence type="ECO:0000305" key="5">
    <source>
    </source>
</evidence>
<name>CAE_XENRU</name>